<reference key="1">
    <citation type="journal article" date="1998" name="J. Immunol.">
        <title>Cloning of BY55, a novel Ig superfamily member expressed on NK cells, CTL, and intestinal intraepithelial lymphocytes.</title>
        <authorList>
            <person name="Anumanthan A."/>
            <person name="Bensussan A."/>
            <person name="Boumsell L."/>
            <person name="Christ A.D."/>
            <person name="Blumberg R.S."/>
            <person name="Voss S.D."/>
            <person name="Patel A.T."/>
            <person name="Robertson M.J."/>
            <person name="Nadler L.M."/>
            <person name="Freeman G.J."/>
        </authorList>
    </citation>
    <scope>NUCLEOTIDE SEQUENCE [MRNA]</scope>
</reference>
<reference key="2">
    <citation type="journal article" date="2005" name="Science">
        <title>The transcriptional landscape of the mammalian genome.</title>
        <authorList>
            <person name="Carninci P."/>
            <person name="Kasukawa T."/>
            <person name="Katayama S."/>
            <person name="Gough J."/>
            <person name="Frith M.C."/>
            <person name="Maeda N."/>
            <person name="Oyama R."/>
            <person name="Ravasi T."/>
            <person name="Lenhard B."/>
            <person name="Wells C."/>
            <person name="Kodzius R."/>
            <person name="Shimokawa K."/>
            <person name="Bajic V.B."/>
            <person name="Brenner S.E."/>
            <person name="Batalov S."/>
            <person name="Forrest A.R."/>
            <person name="Zavolan M."/>
            <person name="Davis M.J."/>
            <person name="Wilming L.G."/>
            <person name="Aidinis V."/>
            <person name="Allen J.E."/>
            <person name="Ambesi-Impiombato A."/>
            <person name="Apweiler R."/>
            <person name="Aturaliya R.N."/>
            <person name="Bailey T.L."/>
            <person name="Bansal M."/>
            <person name="Baxter L."/>
            <person name="Beisel K.W."/>
            <person name="Bersano T."/>
            <person name="Bono H."/>
            <person name="Chalk A.M."/>
            <person name="Chiu K.P."/>
            <person name="Choudhary V."/>
            <person name="Christoffels A."/>
            <person name="Clutterbuck D.R."/>
            <person name="Crowe M.L."/>
            <person name="Dalla E."/>
            <person name="Dalrymple B.P."/>
            <person name="de Bono B."/>
            <person name="Della Gatta G."/>
            <person name="di Bernardo D."/>
            <person name="Down T."/>
            <person name="Engstrom P."/>
            <person name="Fagiolini M."/>
            <person name="Faulkner G."/>
            <person name="Fletcher C.F."/>
            <person name="Fukushima T."/>
            <person name="Furuno M."/>
            <person name="Futaki S."/>
            <person name="Gariboldi M."/>
            <person name="Georgii-Hemming P."/>
            <person name="Gingeras T.R."/>
            <person name="Gojobori T."/>
            <person name="Green R.E."/>
            <person name="Gustincich S."/>
            <person name="Harbers M."/>
            <person name="Hayashi Y."/>
            <person name="Hensch T.K."/>
            <person name="Hirokawa N."/>
            <person name="Hill D."/>
            <person name="Huminiecki L."/>
            <person name="Iacono M."/>
            <person name="Ikeo K."/>
            <person name="Iwama A."/>
            <person name="Ishikawa T."/>
            <person name="Jakt M."/>
            <person name="Kanapin A."/>
            <person name="Katoh M."/>
            <person name="Kawasawa Y."/>
            <person name="Kelso J."/>
            <person name="Kitamura H."/>
            <person name="Kitano H."/>
            <person name="Kollias G."/>
            <person name="Krishnan S.P."/>
            <person name="Kruger A."/>
            <person name="Kummerfeld S.K."/>
            <person name="Kurochkin I.V."/>
            <person name="Lareau L.F."/>
            <person name="Lazarevic D."/>
            <person name="Lipovich L."/>
            <person name="Liu J."/>
            <person name="Liuni S."/>
            <person name="McWilliam S."/>
            <person name="Madan Babu M."/>
            <person name="Madera M."/>
            <person name="Marchionni L."/>
            <person name="Matsuda H."/>
            <person name="Matsuzawa S."/>
            <person name="Miki H."/>
            <person name="Mignone F."/>
            <person name="Miyake S."/>
            <person name="Morris K."/>
            <person name="Mottagui-Tabar S."/>
            <person name="Mulder N."/>
            <person name="Nakano N."/>
            <person name="Nakauchi H."/>
            <person name="Ng P."/>
            <person name="Nilsson R."/>
            <person name="Nishiguchi S."/>
            <person name="Nishikawa S."/>
            <person name="Nori F."/>
            <person name="Ohara O."/>
            <person name="Okazaki Y."/>
            <person name="Orlando V."/>
            <person name="Pang K.C."/>
            <person name="Pavan W.J."/>
            <person name="Pavesi G."/>
            <person name="Pesole G."/>
            <person name="Petrovsky N."/>
            <person name="Piazza S."/>
            <person name="Reed J."/>
            <person name="Reid J.F."/>
            <person name="Ring B.Z."/>
            <person name="Ringwald M."/>
            <person name="Rost B."/>
            <person name="Ruan Y."/>
            <person name="Salzberg S.L."/>
            <person name="Sandelin A."/>
            <person name="Schneider C."/>
            <person name="Schoenbach C."/>
            <person name="Sekiguchi K."/>
            <person name="Semple C.A."/>
            <person name="Seno S."/>
            <person name="Sessa L."/>
            <person name="Sheng Y."/>
            <person name="Shibata Y."/>
            <person name="Shimada H."/>
            <person name="Shimada K."/>
            <person name="Silva D."/>
            <person name="Sinclair B."/>
            <person name="Sperling S."/>
            <person name="Stupka E."/>
            <person name="Sugiura K."/>
            <person name="Sultana R."/>
            <person name="Takenaka Y."/>
            <person name="Taki K."/>
            <person name="Tammoja K."/>
            <person name="Tan S.L."/>
            <person name="Tang S."/>
            <person name="Taylor M.S."/>
            <person name="Tegner J."/>
            <person name="Teichmann S.A."/>
            <person name="Ueda H.R."/>
            <person name="van Nimwegen E."/>
            <person name="Verardo R."/>
            <person name="Wei C.L."/>
            <person name="Yagi K."/>
            <person name="Yamanishi H."/>
            <person name="Zabarovsky E."/>
            <person name="Zhu S."/>
            <person name="Zimmer A."/>
            <person name="Hide W."/>
            <person name="Bult C."/>
            <person name="Grimmond S.M."/>
            <person name="Teasdale R.D."/>
            <person name="Liu E.T."/>
            <person name="Brusic V."/>
            <person name="Quackenbush J."/>
            <person name="Wahlestedt C."/>
            <person name="Mattick J.S."/>
            <person name="Hume D.A."/>
            <person name="Kai C."/>
            <person name="Sasaki D."/>
            <person name="Tomaru Y."/>
            <person name="Fukuda S."/>
            <person name="Kanamori-Katayama M."/>
            <person name="Suzuki M."/>
            <person name="Aoki J."/>
            <person name="Arakawa T."/>
            <person name="Iida J."/>
            <person name="Imamura K."/>
            <person name="Itoh M."/>
            <person name="Kato T."/>
            <person name="Kawaji H."/>
            <person name="Kawagashira N."/>
            <person name="Kawashima T."/>
            <person name="Kojima M."/>
            <person name="Kondo S."/>
            <person name="Konno H."/>
            <person name="Nakano K."/>
            <person name="Ninomiya N."/>
            <person name="Nishio T."/>
            <person name="Okada M."/>
            <person name="Plessy C."/>
            <person name="Shibata K."/>
            <person name="Shiraki T."/>
            <person name="Suzuki S."/>
            <person name="Tagami M."/>
            <person name="Waki K."/>
            <person name="Watahiki A."/>
            <person name="Okamura-Oho Y."/>
            <person name="Suzuki H."/>
            <person name="Kawai J."/>
            <person name="Hayashizaki Y."/>
        </authorList>
    </citation>
    <scope>NUCLEOTIDE SEQUENCE [LARGE SCALE MRNA]</scope>
    <source>
        <strain>C57BL/6J</strain>
        <tissue>Thymus</tissue>
    </source>
</reference>
<reference key="3">
    <citation type="journal article" date="2009" name="PLoS Biol.">
        <title>Lineage-specific biology revealed by a finished genome assembly of the mouse.</title>
        <authorList>
            <person name="Church D.M."/>
            <person name="Goodstadt L."/>
            <person name="Hillier L.W."/>
            <person name="Zody M.C."/>
            <person name="Goldstein S."/>
            <person name="She X."/>
            <person name="Bult C.J."/>
            <person name="Agarwala R."/>
            <person name="Cherry J.L."/>
            <person name="DiCuccio M."/>
            <person name="Hlavina W."/>
            <person name="Kapustin Y."/>
            <person name="Meric P."/>
            <person name="Maglott D."/>
            <person name="Birtle Z."/>
            <person name="Marques A.C."/>
            <person name="Graves T."/>
            <person name="Zhou S."/>
            <person name="Teague B."/>
            <person name="Potamousis K."/>
            <person name="Churas C."/>
            <person name="Place M."/>
            <person name="Herschleb J."/>
            <person name="Runnheim R."/>
            <person name="Forrest D."/>
            <person name="Amos-Landgraf J."/>
            <person name="Schwartz D.C."/>
            <person name="Cheng Z."/>
            <person name="Lindblad-Toh K."/>
            <person name="Eichler E.E."/>
            <person name="Ponting C.P."/>
        </authorList>
    </citation>
    <scope>NUCLEOTIDE SEQUENCE [LARGE SCALE GENOMIC DNA]</scope>
    <source>
        <strain>C57BL/6J</strain>
    </source>
</reference>
<reference key="4">
    <citation type="journal article" date="2005" name="J. Immunol.">
        <title>Murine CD160, Ig-like receptor on NK cells and NKT cells, recognizes classical and nonclassical MHC class I and regulates NK cell activation.</title>
        <authorList>
            <person name="Maeda M."/>
            <person name="Carpenito C."/>
            <person name="Russell R.C."/>
            <person name="Dasanjh J."/>
            <person name="Veinotte L.L."/>
            <person name="Ohta H."/>
            <person name="Yamamura T."/>
            <person name="Tan R."/>
            <person name="Takei F."/>
        </authorList>
    </citation>
    <scope>FUNCTION</scope>
    <scope>TISSUE SPECIFICITY</scope>
    <scope>SUBCELLULAR LOCATION</scope>
    <scope>SUBUNIT</scope>
</reference>
<reference key="5">
    <citation type="journal article" date="2008" name="Nat. Immunol.">
        <title>CD160 inhibits activation of human CD4+ T cells through interaction with herpesvirus entry mediator.</title>
        <authorList>
            <person name="Cai G."/>
            <person name="Anumanthan A."/>
            <person name="Brown J.A."/>
            <person name="Greenfield E.A."/>
            <person name="Zhu B."/>
            <person name="Freeman G.J."/>
        </authorList>
    </citation>
    <scope>SUBUNIT</scope>
    <scope>INTERACTION WITH TNFRSF14</scope>
</reference>
<reference key="6">
    <citation type="journal article" date="2012" name="Nature">
        <title>HVEM signalling at mucosal barriers provides host defence against pathogenic bacteria.</title>
        <authorList>
            <person name="Shui J.W."/>
            <person name="Larange A."/>
            <person name="Kim G."/>
            <person name="Vela J.L."/>
            <person name="Zahner S."/>
            <person name="Cheroutre H."/>
            <person name="Kronenberg M."/>
        </authorList>
    </citation>
    <scope>FUNCTION</scope>
    <scope>TISSUE SPECIFICITY</scope>
    <scope>SUBCELLULAR LOCATION</scope>
</reference>
<reference key="7">
    <citation type="journal article" date="2015" name="J. Exp. Med.">
        <title>CD160 is essential for NK-mediated IFN-gamma production.</title>
        <authorList>
            <person name="Tu T.C."/>
            <person name="Brown N.K."/>
            <person name="Kim T.J."/>
            <person name="Wroblewska J."/>
            <person name="Yang X."/>
            <person name="Guo X."/>
            <person name="Lee S.H."/>
            <person name="Kumar V."/>
            <person name="Lee K.M."/>
            <person name="Fu Y.X."/>
        </authorList>
    </citation>
    <scope>FUNCTION</scope>
    <scope>SUBCELLULAR LOCATION</scope>
    <scope>TISSUE SPECIFICITY</scope>
    <scope>DISRUPTION PHENOTYPE</scope>
</reference>
<evidence type="ECO:0000250" key="1"/>
<evidence type="ECO:0000250" key="2">
    <source>
        <dbReference type="UniProtKB" id="O95971"/>
    </source>
</evidence>
<evidence type="ECO:0000255" key="3"/>
<evidence type="ECO:0000255" key="4">
    <source>
        <dbReference type="PROSITE-ProRule" id="PRU00114"/>
    </source>
</evidence>
<evidence type="ECO:0000269" key="5">
    <source>
    </source>
</evidence>
<evidence type="ECO:0000269" key="6">
    <source>
    </source>
</evidence>
<evidence type="ECO:0000269" key="7">
    <source>
    </source>
</evidence>
<evidence type="ECO:0000269" key="8">
    <source>
    </source>
</evidence>
<evidence type="ECO:0000303" key="9">
    <source>
    </source>
</evidence>
<evidence type="ECO:0000303" key="10">
    <source>
    </source>
</evidence>
<evidence type="ECO:0000305" key="11"/>
<evidence type="ECO:0000305" key="12">
    <source>
    </source>
</evidence>
<evidence type="ECO:0000312" key="13">
    <source>
        <dbReference type="MGI" id="MGI:1860383"/>
    </source>
</evidence>
<protein>
    <recommendedName>
        <fullName>CD160 antigen</fullName>
    </recommendedName>
    <alternativeName>
        <fullName>Natural killer cell receptor BY55</fullName>
    </alternativeName>
    <cdAntigenName evidence="10">CD160</cdAntigenName>
    <component>
        <recommendedName>
            <fullName evidence="9">CD160 antigen, soluble form</fullName>
        </recommendedName>
    </component>
</protein>
<proteinExistence type="evidence at protein level"/>
<keyword id="KW-1064">Adaptive immunity</keyword>
<keyword id="KW-1003">Cell membrane</keyword>
<keyword id="KW-1015">Disulfide bond</keyword>
<keyword id="KW-0325">Glycoprotein</keyword>
<keyword id="KW-0336">GPI-anchor</keyword>
<keyword id="KW-0391">Immunity</keyword>
<keyword id="KW-0393">Immunoglobulin domain</keyword>
<keyword id="KW-0399">Innate immunity</keyword>
<keyword id="KW-0449">Lipoprotein</keyword>
<keyword id="KW-0472">Membrane</keyword>
<keyword id="KW-0675">Receptor</keyword>
<keyword id="KW-1185">Reference proteome</keyword>
<keyword id="KW-0964">Secreted</keyword>
<keyword id="KW-0732">Signal</keyword>
<feature type="signal peptide" evidence="3">
    <location>
        <begin position="1"/>
        <end position="27"/>
    </location>
</feature>
<feature type="chain" id="PRO_0000014545" description="CD160 antigen">
    <location>
        <begin position="28"/>
        <end position="160"/>
    </location>
</feature>
<feature type="chain" id="PRO_0000446050" description="CD160 antigen, soluble form" evidence="12">
    <location>
        <begin position="28"/>
        <end position="160"/>
    </location>
</feature>
<feature type="propeptide" id="PRO_0000014546" description="Removed in mature form" evidence="3">
    <location>
        <begin position="161"/>
        <end position="185"/>
    </location>
</feature>
<feature type="domain" description="Ig-like V-type" evidence="2">
    <location>
        <begin position="28"/>
        <end position="136"/>
    </location>
</feature>
<feature type="lipid moiety-binding region" description="GPI-anchor amidated serine" evidence="1">
    <location>
        <position position="160"/>
    </location>
</feature>
<feature type="glycosylation site" description="N-linked (GlcNAc...) asparagine" evidence="3">
    <location>
        <position position="138"/>
    </location>
</feature>
<feature type="glycosylation site" description="N-linked (GlcNAc...) asparagine" evidence="3">
    <location>
        <position position="156"/>
    </location>
</feature>
<feature type="disulfide bond" evidence="4">
    <location>
        <begin position="47"/>
        <end position="115"/>
    </location>
</feature>
<feature type="disulfide bond" evidence="4">
    <location>
        <begin position="64"/>
        <end position="71"/>
    </location>
</feature>
<feature type="sequence conflict" description="In Ref. 1; AAC62227." evidence="11" ref="1">
    <original>L</original>
    <variation>P</variation>
    <location>
        <position position="45"/>
    </location>
</feature>
<gene>
    <name evidence="10 13" type="primary">Cd160</name>
    <name evidence="10" type="synonym">By55</name>
</gene>
<accession>O88875</accession>
<accession>Q8C9H4</accession>
<organism>
    <name type="scientific">Mus musculus</name>
    <name type="common">Mouse</name>
    <dbReference type="NCBI Taxonomy" id="10090"/>
    <lineage>
        <taxon>Eukaryota</taxon>
        <taxon>Metazoa</taxon>
        <taxon>Chordata</taxon>
        <taxon>Craniata</taxon>
        <taxon>Vertebrata</taxon>
        <taxon>Euteleostomi</taxon>
        <taxon>Mammalia</taxon>
        <taxon>Eutheria</taxon>
        <taxon>Euarchontoglires</taxon>
        <taxon>Glires</taxon>
        <taxon>Rodentia</taxon>
        <taxon>Myomorpha</taxon>
        <taxon>Muroidea</taxon>
        <taxon>Muridae</taxon>
        <taxon>Murinae</taxon>
        <taxon>Mus</taxon>
        <taxon>Mus</taxon>
    </lineage>
</organism>
<name>BY55_MOUSE</name>
<dbReference type="EMBL" id="AF060982">
    <property type="protein sequence ID" value="AAC62227.1"/>
    <property type="molecule type" value="mRNA"/>
</dbReference>
<dbReference type="EMBL" id="AK042093">
    <property type="protein sequence ID" value="BAC31162.1"/>
    <property type="molecule type" value="mRNA"/>
</dbReference>
<dbReference type="EMBL" id="AK145332">
    <property type="protein sequence ID" value="BAE26372.1"/>
    <property type="molecule type" value="mRNA"/>
</dbReference>
<dbReference type="EMBL" id="AC127297">
    <property type="status" value="NOT_ANNOTATED_CDS"/>
    <property type="molecule type" value="Genomic_DNA"/>
</dbReference>
<dbReference type="CCDS" id="CCDS17648.1"/>
<dbReference type="RefSeq" id="NP_001156968.1">
    <property type="nucleotide sequence ID" value="NM_001163496.1"/>
</dbReference>
<dbReference type="RefSeq" id="NP_061237.3">
    <property type="nucleotide sequence ID" value="NM_018767.3"/>
</dbReference>
<dbReference type="SMR" id="O88875"/>
<dbReference type="FunCoup" id="O88875">
    <property type="interactions" value="798"/>
</dbReference>
<dbReference type="STRING" id="10090.ENSMUSP00000102689"/>
<dbReference type="GlyCosmos" id="O88875">
    <property type="glycosylation" value="2 sites, No reported glycans"/>
</dbReference>
<dbReference type="GlyGen" id="O88875">
    <property type="glycosylation" value="2 sites"/>
</dbReference>
<dbReference type="PhosphoSitePlus" id="O88875"/>
<dbReference type="PaxDb" id="10090-ENSMUSP00000102689"/>
<dbReference type="ProteomicsDB" id="273780"/>
<dbReference type="Antibodypedia" id="33967">
    <property type="antibodies" value="639 antibodies from 36 providers"/>
</dbReference>
<dbReference type="DNASU" id="54215"/>
<dbReference type="Ensembl" id="ENSMUST00000047702.8">
    <property type="protein sequence ID" value="ENSMUSP00000037466.8"/>
    <property type="gene ID" value="ENSMUSG00000038304.15"/>
</dbReference>
<dbReference type="Ensembl" id="ENSMUST00000107074.8">
    <property type="protein sequence ID" value="ENSMUSP00000102689.2"/>
    <property type="gene ID" value="ENSMUSG00000038304.15"/>
</dbReference>
<dbReference type="GeneID" id="54215"/>
<dbReference type="KEGG" id="mmu:54215"/>
<dbReference type="UCSC" id="uc008qof.2">
    <property type="organism name" value="mouse"/>
</dbReference>
<dbReference type="AGR" id="MGI:1860383"/>
<dbReference type="CTD" id="11126"/>
<dbReference type="MGI" id="MGI:1860383">
    <property type="gene designation" value="Cd160"/>
</dbReference>
<dbReference type="VEuPathDB" id="HostDB:ENSMUSG00000038304"/>
<dbReference type="eggNOG" id="ENOG502RR8D">
    <property type="taxonomic scope" value="Eukaryota"/>
</dbReference>
<dbReference type="GeneTree" id="ENSGT00390000007258"/>
<dbReference type="InParanoid" id="O88875"/>
<dbReference type="OMA" id="HLQGHFF"/>
<dbReference type="OrthoDB" id="9450911at2759"/>
<dbReference type="TreeFam" id="TF338321"/>
<dbReference type="Reactome" id="R-MMU-198933">
    <property type="pathway name" value="Immunoregulatory interactions between a Lymphoid and a non-Lymphoid cell"/>
</dbReference>
<dbReference type="BioGRID-ORCS" id="54215">
    <property type="hits" value="2 hits in 76 CRISPR screens"/>
</dbReference>
<dbReference type="ChiTaRS" id="Cd160">
    <property type="organism name" value="mouse"/>
</dbReference>
<dbReference type="PRO" id="PR:O88875"/>
<dbReference type="Proteomes" id="UP000000589">
    <property type="component" value="Chromosome 3"/>
</dbReference>
<dbReference type="RNAct" id="O88875">
    <property type="molecule type" value="protein"/>
</dbReference>
<dbReference type="Bgee" id="ENSMUSG00000038304">
    <property type="expression patterns" value="Expressed in secondary oocyte and 46 other cell types or tissues"/>
</dbReference>
<dbReference type="ExpressionAtlas" id="O88875">
    <property type="expression patterns" value="baseline and differential"/>
</dbReference>
<dbReference type="GO" id="GO:0005576">
    <property type="term" value="C:extracellular region"/>
    <property type="evidence" value="ECO:0007669"/>
    <property type="project" value="UniProtKB-SubCell"/>
</dbReference>
<dbReference type="GO" id="GO:0005886">
    <property type="term" value="C:plasma membrane"/>
    <property type="evidence" value="ECO:0000314"/>
    <property type="project" value="UniProtKB"/>
</dbReference>
<dbReference type="GO" id="GO:0098552">
    <property type="term" value="C:side of membrane"/>
    <property type="evidence" value="ECO:0007669"/>
    <property type="project" value="UniProtKB-KW"/>
</dbReference>
<dbReference type="GO" id="GO:0032397">
    <property type="term" value="F:activating MHC class I receptor activity"/>
    <property type="evidence" value="ECO:0000250"/>
    <property type="project" value="UniProtKB"/>
</dbReference>
<dbReference type="GO" id="GO:0019900">
    <property type="term" value="F:kinase binding"/>
    <property type="evidence" value="ECO:0007669"/>
    <property type="project" value="Ensembl"/>
</dbReference>
<dbReference type="GO" id="GO:0023024">
    <property type="term" value="F:MHC class I protein complex binding"/>
    <property type="evidence" value="ECO:0000314"/>
    <property type="project" value="UniProtKB"/>
</dbReference>
<dbReference type="GO" id="GO:0032394">
    <property type="term" value="F:MHC class Ib receptor activity"/>
    <property type="evidence" value="ECO:0007669"/>
    <property type="project" value="Ensembl"/>
</dbReference>
<dbReference type="GO" id="GO:0005102">
    <property type="term" value="F:signaling receptor binding"/>
    <property type="evidence" value="ECO:0007669"/>
    <property type="project" value="Ensembl"/>
</dbReference>
<dbReference type="GO" id="GO:0002250">
    <property type="term" value="P:adaptive immune response"/>
    <property type="evidence" value="ECO:0007669"/>
    <property type="project" value="UniProtKB-KW"/>
</dbReference>
<dbReference type="GO" id="GO:0050829">
    <property type="term" value="P:defense response to Gram-negative bacterium"/>
    <property type="evidence" value="ECO:0000315"/>
    <property type="project" value="MGI"/>
</dbReference>
<dbReference type="GO" id="GO:0045087">
    <property type="term" value="P:innate immune response"/>
    <property type="evidence" value="ECO:0007669"/>
    <property type="project" value="UniProtKB-KW"/>
</dbReference>
<dbReference type="GO" id="GO:0002385">
    <property type="term" value="P:mucosal immune response"/>
    <property type="evidence" value="ECO:0000314"/>
    <property type="project" value="UniProtKB"/>
</dbReference>
<dbReference type="GO" id="GO:1905675">
    <property type="term" value="P:negative regulation of adaptive immune memory response"/>
    <property type="evidence" value="ECO:0007669"/>
    <property type="project" value="Ensembl"/>
</dbReference>
<dbReference type="GO" id="GO:0016525">
    <property type="term" value="P:negative regulation of angiogenesis"/>
    <property type="evidence" value="ECO:0007669"/>
    <property type="project" value="Ensembl"/>
</dbReference>
<dbReference type="GO" id="GO:1900280">
    <property type="term" value="P:negative regulation of CD4-positive, alpha-beta T cell costimulation"/>
    <property type="evidence" value="ECO:0007669"/>
    <property type="project" value="Ensembl"/>
</dbReference>
<dbReference type="GO" id="GO:0050860">
    <property type="term" value="P:negative regulation of T cell receptor signaling pathway"/>
    <property type="evidence" value="ECO:0007669"/>
    <property type="project" value="Ensembl"/>
</dbReference>
<dbReference type="GO" id="GO:0043491">
    <property type="term" value="P:phosphatidylinositol 3-kinase/protein kinase B signal transduction"/>
    <property type="evidence" value="ECO:0000250"/>
    <property type="project" value="UniProtKB"/>
</dbReference>
<dbReference type="GO" id="GO:2000353">
    <property type="term" value="P:positive regulation of endothelial cell apoptotic process"/>
    <property type="evidence" value="ECO:0007669"/>
    <property type="project" value="Ensembl"/>
</dbReference>
<dbReference type="GO" id="GO:0002729">
    <property type="term" value="P:positive regulation of natural killer cell cytokine production"/>
    <property type="evidence" value="ECO:0000250"/>
    <property type="project" value="UniProtKB"/>
</dbReference>
<dbReference type="GO" id="GO:0045954">
    <property type="term" value="P:positive regulation of natural killer cell mediated cytotoxicity"/>
    <property type="evidence" value="ECO:0000250"/>
    <property type="project" value="UniProtKB"/>
</dbReference>
<dbReference type="GO" id="GO:0002857">
    <property type="term" value="P:positive regulation of natural killer cell mediated immune response to tumor cell"/>
    <property type="evidence" value="ECO:0000315"/>
    <property type="project" value="UniProtKB"/>
</dbReference>
<dbReference type="GO" id="GO:0032729">
    <property type="term" value="P:positive regulation of type II interferon production"/>
    <property type="evidence" value="ECO:0000315"/>
    <property type="project" value="UniProtKB"/>
</dbReference>
<dbReference type="GO" id="GO:0031295">
    <property type="term" value="P:T cell costimulation"/>
    <property type="evidence" value="ECO:0000250"/>
    <property type="project" value="UniProtKB"/>
</dbReference>
<dbReference type="CDD" id="cd21392">
    <property type="entry name" value="IgC2_CD160"/>
    <property type="match status" value="1"/>
</dbReference>
<dbReference type="FunFam" id="2.60.40.10:FF:002097">
    <property type="entry name" value="CD160 antigen"/>
    <property type="match status" value="1"/>
</dbReference>
<dbReference type="Gene3D" id="2.60.40.10">
    <property type="entry name" value="Immunoglobulins"/>
    <property type="match status" value="1"/>
</dbReference>
<dbReference type="InterPro" id="IPR042385">
    <property type="entry name" value="CD160"/>
</dbReference>
<dbReference type="InterPro" id="IPR007110">
    <property type="entry name" value="Ig-like_dom"/>
</dbReference>
<dbReference type="InterPro" id="IPR036179">
    <property type="entry name" value="Ig-like_dom_sf"/>
</dbReference>
<dbReference type="InterPro" id="IPR013783">
    <property type="entry name" value="Ig-like_fold"/>
</dbReference>
<dbReference type="InterPro" id="IPR003599">
    <property type="entry name" value="Ig_sub"/>
</dbReference>
<dbReference type="InterPro" id="IPR013106">
    <property type="entry name" value="Ig_V-set"/>
</dbReference>
<dbReference type="PANTHER" id="PTHR15425">
    <property type="entry name" value="CD160 ANTIGEN"/>
    <property type="match status" value="1"/>
</dbReference>
<dbReference type="PANTHER" id="PTHR15425:SF0">
    <property type="entry name" value="CD160 ANTIGEN"/>
    <property type="match status" value="1"/>
</dbReference>
<dbReference type="Pfam" id="PF07686">
    <property type="entry name" value="V-set"/>
    <property type="match status" value="1"/>
</dbReference>
<dbReference type="SMART" id="SM00409">
    <property type="entry name" value="IG"/>
    <property type="match status" value="1"/>
</dbReference>
<dbReference type="SUPFAM" id="SSF48726">
    <property type="entry name" value="Immunoglobulin"/>
    <property type="match status" value="1"/>
</dbReference>
<dbReference type="PROSITE" id="PS50835">
    <property type="entry name" value="IG_LIKE"/>
    <property type="match status" value="1"/>
</dbReference>
<sequence length="185" mass="20570">MQRILMAPGQSCCALAILLAIVNFQHGGCIHVTSSASQKGGRLDLTCTLWHKKDEAEGLILFWCKDNPWNCSPETNLEQLRVKRDPETDGITEKSSQLVFTIEQATPSDSGTYQCCARSQKPEIYIHGHFLSVLVTGNHTEIRQRQRSHPDFSHINGTLSSGFLQVKAWGMLVTSLVALQALYTL</sequence>
<comment type="function">
    <molecule>CD160 antigen</molecule>
    <text evidence="2 5 7 8">Receptor on immune cells capable to deliver stimulatory or inhibitory signals that regulate cell activation and differentiation. Exists as a GPI-anchored and as a transmembrane form, each likely initiating distinct signaling pathways via phosphoinositol 3-kinase in activated NK cells and via LCK and CD247/CD3 zeta chain in activated T cells (By similarity). Receptor for both classical and non-classical MHC class I molecules (PubMed:16177084). Receptor or ligand for TNF superfamily member TNFRSF14, participating in bidirectional cell-cell contact signaling between antigen presenting cells and lymphocytes. Upon ligation of TNFRSF14, provides stimulatory signal to NK cells enhancing IFNG production and anti-tumor immune response (PubMed:25711213). On activated CD4+ T cells, interacts with TNFRSF14 and down-regulates CD28 costimulatory signaling, restricting memory and alloantigen-specific immune response (By similarity). In the context of bacterial infection, acts as a ligand for TNFRSF14 on epithelial cells, triggering the production of antimicrobial proteins and pro-inflammatory cytokines (PubMed:22801499).</text>
</comment>
<comment type="function">
    <molecule>CD160 antigen, soluble form</molecule>
    <text evidence="2">The soluble GPI-cleaved form, usually released by activated lymphocytes, might play an immune regulatory role by limiting lymphocyte effector functions.</text>
</comment>
<comment type="subunit">
    <text evidence="2 5 6">Homomultimer; disulfide-linked (By similarity). Interacts with classical and non-classical MHC class I molecules (PubMed:16177084). Interacts with TNFRSF14 (via cysteine-rich domain 1); this interaction is direct (PubMed:18193050). Interacts with LCK and CD247/CD3 zeta chain (By similarity).</text>
</comment>
<comment type="subcellular location">
    <molecule>CD160 antigen</molecule>
    <subcellularLocation>
        <location evidence="7 8">Cell membrane</location>
        <topology evidence="2">Lipid-anchor</topology>
        <topology evidence="2">GPI-anchor</topology>
    </subcellularLocation>
</comment>
<comment type="subcellular location">
    <molecule>CD160 antigen, soluble form</molecule>
    <subcellularLocation>
        <location evidence="2 12">Secreted</location>
    </subcellularLocation>
    <text evidence="2 12">Released from the cell membrane by GPI cleavage.</text>
</comment>
<comment type="tissue specificity">
    <text evidence="5 7 8">Expressed in resting and activated NK cell subsets (at protein level) (PubMed:16177084, PubMed:25711213). Expressed in resting NKT cells (at protein level) (PubMed:16177084). Expressed in activated CD8+ T cells (at protein level). Highly expressed in intraepithelial lymphocyte (IEL) subsets, particularly in innate-like CD8A-positive IELs (at protein level) (PubMed:22801499).</text>
</comment>
<comment type="disruption phenotype">
    <text evidence="8">No visible phenotype.</text>
</comment>